<proteinExistence type="evidence at transcript level"/>
<protein>
    <recommendedName>
        <fullName>Peroxisome proliferator-activated receptor gamma coactivator 1-alpha</fullName>
        <shortName>PGC-1-alpha</shortName>
        <shortName>PPAR-gamma coactivator 1-alpha</shortName>
        <shortName>PPARGC-1-alpha</shortName>
    </recommendedName>
</protein>
<dbReference type="EMBL" id="AB106107">
    <property type="protein sequence ID" value="BAC66018.1"/>
    <property type="molecule type" value="mRNA"/>
</dbReference>
<dbReference type="EMBL" id="AY321517">
    <property type="protein sequence ID" value="AAQ82595.1"/>
    <property type="molecule type" value="mRNA"/>
</dbReference>
<dbReference type="RefSeq" id="NP_808814.1">
    <property type="nucleotide sequence ID" value="NM_177945.3"/>
</dbReference>
<dbReference type="SMR" id="Q865B7"/>
<dbReference type="FunCoup" id="Q865B7">
    <property type="interactions" value="341"/>
</dbReference>
<dbReference type="STRING" id="9913.ENSBTAP00000022636"/>
<dbReference type="PaxDb" id="9913-ENSBTAP00000048844"/>
<dbReference type="Ensembl" id="ENSBTAT00000083579.1">
    <property type="protein sequence ID" value="ENSBTAP00000063133.1"/>
    <property type="gene ID" value="ENSBTAG00000017024.6"/>
</dbReference>
<dbReference type="GeneID" id="338446"/>
<dbReference type="KEGG" id="bta:338446"/>
<dbReference type="CTD" id="10891"/>
<dbReference type="VEuPathDB" id="HostDB:ENSBTAG00000017024"/>
<dbReference type="VGNC" id="VGNC:33184">
    <property type="gene designation" value="PPARGC1A"/>
</dbReference>
<dbReference type="eggNOG" id="ENOG502QSXU">
    <property type="taxonomic scope" value="Eukaryota"/>
</dbReference>
<dbReference type="GeneTree" id="ENSGT00950000183137"/>
<dbReference type="HOGENOM" id="CLU_020104_0_0_1"/>
<dbReference type="InParanoid" id="Q865B7"/>
<dbReference type="OMA" id="DLPCNNR"/>
<dbReference type="OrthoDB" id="10047851at2759"/>
<dbReference type="Reactome" id="R-BTA-9841922">
    <property type="pathway name" value="MLL4 and MLL3 complexes regulate expression of PPARG target genes in adipogenesis and hepatic steatosis"/>
</dbReference>
<dbReference type="Proteomes" id="UP000009136">
    <property type="component" value="Chromosome 6"/>
</dbReference>
<dbReference type="Bgee" id="ENSBTAG00000017024">
    <property type="expression patterns" value="Expressed in cardiac ventricle and 92 other cell types or tissues"/>
</dbReference>
<dbReference type="GO" id="GO:0005634">
    <property type="term" value="C:nucleus"/>
    <property type="evidence" value="ECO:0000250"/>
    <property type="project" value="UniProtKB"/>
</dbReference>
<dbReference type="GO" id="GO:0016605">
    <property type="term" value="C:PML body"/>
    <property type="evidence" value="ECO:0007669"/>
    <property type="project" value="UniProtKB-SubCell"/>
</dbReference>
<dbReference type="GO" id="GO:0031490">
    <property type="term" value="F:chromatin DNA binding"/>
    <property type="evidence" value="ECO:0000250"/>
    <property type="project" value="UniProtKB"/>
</dbReference>
<dbReference type="GO" id="GO:0003677">
    <property type="term" value="F:DNA binding"/>
    <property type="evidence" value="ECO:0000250"/>
    <property type="project" value="AgBase"/>
</dbReference>
<dbReference type="GO" id="GO:0003723">
    <property type="term" value="F:RNA binding"/>
    <property type="evidence" value="ECO:0007669"/>
    <property type="project" value="UniProtKB-KW"/>
</dbReference>
<dbReference type="GO" id="GO:0043565">
    <property type="term" value="F:sequence-specific DNA binding"/>
    <property type="evidence" value="ECO:0000250"/>
    <property type="project" value="UniProtKB"/>
</dbReference>
<dbReference type="GO" id="GO:0003713">
    <property type="term" value="F:transcription coactivator activity"/>
    <property type="evidence" value="ECO:0000250"/>
    <property type="project" value="UniProtKB"/>
</dbReference>
<dbReference type="GO" id="GO:0034599">
    <property type="term" value="P:cellular response to oxidative stress"/>
    <property type="evidence" value="ECO:0000250"/>
    <property type="project" value="UniProtKB"/>
</dbReference>
<dbReference type="GO" id="GO:0032922">
    <property type="term" value="P:circadian regulation of gene expression"/>
    <property type="evidence" value="ECO:0000250"/>
    <property type="project" value="UniProtKB"/>
</dbReference>
<dbReference type="GO" id="GO:0097009">
    <property type="term" value="P:energy homeostasis"/>
    <property type="evidence" value="ECO:0000250"/>
    <property type="project" value="UniProtKB"/>
</dbReference>
<dbReference type="GO" id="GO:0006094">
    <property type="term" value="P:gluconeogenesis"/>
    <property type="evidence" value="ECO:0000250"/>
    <property type="project" value="UniProtKB"/>
</dbReference>
<dbReference type="GO" id="GO:0043524">
    <property type="term" value="P:negative regulation of neuron apoptotic process"/>
    <property type="evidence" value="ECO:0000250"/>
    <property type="project" value="UniProtKB"/>
</dbReference>
<dbReference type="GO" id="GO:0045893">
    <property type="term" value="P:positive regulation of DNA-templated transcription"/>
    <property type="evidence" value="ECO:0000250"/>
    <property type="project" value="AgBase"/>
</dbReference>
<dbReference type="GO" id="GO:0045944">
    <property type="term" value="P:positive regulation of transcription by RNA polymerase II"/>
    <property type="evidence" value="ECO:0000250"/>
    <property type="project" value="AgBase"/>
</dbReference>
<dbReference type="GO" id="GO:0042752">
    <property type="term" value="P:regulation of circadian rhythm"/>
    <property type="evidence" value="ECO:0000250"/>
    <property type="project" value="UniProtKB"/>
</dbReference>
<dbReference type="GO" id="GO:0006355">
    <property type="term" value="P:regulation of DNA-templated transcription"/>
    <property type="evidence" value="ECO:0000250"/>
    <property type="project" value="UniProtKB"/>
</dbReference>
<dbReference type="GO" id="GO:0022904">
    <property type="term" value="P:respiratory electron transport chain"/>
    <property type="evidence" value="ECO:0000250"/>
    <property type="project" value="UniProtKB"/>
</dbReference>
<dbReference type="GO" id="GO:0014850">
    <property type="term" value="P:response to muscle activity"/>
    <property type="evidence" value="ECO:0000250"/>
    <property type="project" value="UniProtKB"/>
</dbReference>
<dbReference type="CDD" id="cd12623">
    <property type="entry name" value="RRM_PPARGC1A"/>
    <property type="match status" value="1"/>
</dbReference>
<dbReference type="FunFam" id="3.30.70.330:FF:000184">
    <property type="entry name" value="Peroxisome proliferator-activated receptor gamma coactivator 1-alpha"/>
    <property type="match status" value="1"/>
</dbReference>
<dbReference type="Gene3D" id="3.30.70.330">
    <property type="match status" value="1"/>
</dbReference>
<dbReference type="InterPro" id="IPR012677">
    <property type="entry name" value="Nucleotide-bd_a/b_plait_sf"/>
</dbReference>
<dbReference type="InterPro" id="IPR034605">
    <property type="entry name" value="PGC-1"/>
</dbReference>
<dbReference type="InterPro" id="IPR034833">
    <property type="entry name" value="PPARGC1A_RRM"/>
</dbReference>
<dbReference type="InterPro" id="IPR035979">
    <property type="entry name" value="RBD_domain_sf"/>
</dbReference>
<dbReference type="InterPro" id="IPR000504">
    <property type="entry name" value="RRM_dom"/>
</dbReference>
<dbReference type="PANTHER" id="PTHR15528">
    <property type="entry name" value="PEROXISOME PROLIFERATOR ACTIVATED RECEPTOR GAMMA COACTIVATOR 1 PGC-1 -RELATED"/>
    <property type="match status" value="1"/>
</dbReference>
<dbReference type="PANTHER" id="PTHR15528:SF10">
    <property type="entry name" value="PEROXISOME PROLIFERATOR-ACTIVATED RECEPTOR GAMMA COACTIVATOR 1-ALPHA"/>
    <property type="match status" value="1"/>
</dbReference>
<dbReference type="Pfam" id="PF00076">
    <property type="entry name" value="RRM_1"/>
    <property type="match status" value="1"/>
</dbReference>
<dbReference type="SMART" id="SM00360">
    <property type="entry name" value="RRM"/>
    <property type="match status" value="1"/>
</dbReference>
<dbReference type="SUPFAM" id="SSF54928">
    <property type="entry name" value="RNA-binding domain, RBD"/>
    <property type="match status" value="1"/>
</dbReference>
<dbReference type="PROSITE" id="PS50102">
    <property type="entry name" value="RRM"/>
    <property type="match status" value="1"/>
</dbReference>
<comment type="function">
    <text evidence="1 2">Transcriptional coactivator for steroid receptors and nuclear receptors. Greatly increases the transcriptional activity of PPARG and thyroid hormone receptor on the uncoupling protein promoter. Can regulate key mitochondrial genes that contribute to the program of adaptive thermogenesis. Plays an essential role in metabolic reprogramming in response to dietary availability through coordination of the expression of a wide array of genes involved in glucose and fatty acid metabolism. Acts as a key regulator of gluconeogenesis: stimulates hepatic gluconeogenesis by increasing the expression of gluconeogenic enzymes, and acting together with FOXO1 to promote the fasting gluconeogenic program (By similarity). Induces the expression of PERM1 in the skeletal muscle in an ESRRA-dependent manner. Also involved in the integration of the circadian rhythms and energy metabolism. Required for oscillatory expression of clock genes, such as BMAL1 and NR1D1, through the coactivation of RORA and RORC, and metabolic genes, such as PDK4 and PEPCK (By similarity).</text>
</comment>
<comment type="subunit">
    <text evidence="1 2">Homooligomer (By similarity). Interacts with MYBBP1A; inhibits MYBBP1A transcriptional activation. Interacts with PRDM16, LPIN1 and PML. Interacts (via LXXLL motif) with RORA and RORC (via AF-2 motif); activates RORA and RORC transcriptional activation (By similarity). Interacts with LRPPRC (By similarity). Interacts with FOXO1 (By similarity). Interacts with NR5A2 (By similarity).</text>
</comment>
<comment type="subcellular location">
    <subcellularLocation>
        <location evidence="1">Nucleus</location>
    </subcellularLocation>
    <subcellularLocation>
        <location evidence="1">Nucleus</location>
        <location evidence="1">PML body</location>
    </subcellularLocation>
</comment>
<comment type="PTM">
    <text evidence="1">Phosphorylation by AMPK in skeletal muscle increases activation of its own promoter. Phosphorylated by CLK2.</text>
</comment>
<comment type="PTM">
    <text evidence="2">Heavily acetylated by KAT2A/GCN5 under conditions of high nutrients, leading to inactivation of PPARGC1A. Deacetylated by SIRT1 in low nutrients/high NAD conditions, leading to its activation.</text>
</comment>
<comment type="PTM">
    <text evidence="2">Ubiquitinated. Ubiquitination by RNF34 induces proteasomal degradation.</text>
</comment>
<feature type="chain" id="PRO_0000081731" description="Peroxisome proliferator-activated receptor gamma coactivator 1-alpha">
    <location>
        <begin position="1"/>
        <end position="796"/>
    </location>
</feature>
<feature type="domain" description="RRM" evidence="3">
    <location>
        <begin position="675"/>
        <end position="751"/>
    </location>
</feature>
<feature type="region of interest" description="Disordered" evidence="4">
    <location>
        <begin position="98"/>
        <end position="138"/>
    </location>
</feature>
<feature type="region of interest" description="Disordered" evidence="4">
    <location>
        <begin position="211"/>
        <end position="275"/>
    </location>
</feature>
<feature type="region of interest" description="Disordered" evidence="4">
    <location>
        <begin position="288"/>
        <end position="374"/>
    </location>
</feature>
<feature type="region of interest" description="Interaction with PPARG" evidence="2">
    <location>
        <begin position="291"/>
        <end position="337"/>
    </location>
</feature>
<feature type="region of interest" description="Mediates interaction with RNF34" evidence="2">
    <location>
        <begin position="348"/>
        <end position="796"/>
    </location>
</feature>
<feature type="region of interest" description="Disordered" evidence="4">
    <location>
        <begin position="398"/>
        <end position="452"/>
    </location>
</feature>
<feature type="region of interest" description="Disordered" evidence="4">
    <location>
        <begin position="542"/>
        <end position="597"/>
    </location>
</feature>
<feature type="region of interest" description="Disordered" evidence="4">
    <location>
        <begin position="609"/>
        <end position="637"/>
    </location>
</feature>
<feature type="region of interest" description="Disordered" evidence="4">
    <location>
        <begin position="648"/>
        <end position="667"/>
    </location>
</feature>
<feature type="short sequence motif" description="LXXLL motif">
    <location>
        <begin position="142"/>
        <end position="146"/>
    </location>
</feature>
<feature type="compositionally biased region" description="Polar residues" evidence="4">
    <location>
        <begin position="114"/>
        <end position="127"/>
    </location>
</feature>
<feature type="compositionally biased region" description="Basic and acidic residues" evidence="4">
    <location>
        <begin position="217"/>
        <end position="235"/>
    </location>
</feature>
<feature type="compositionally biased region" description="Polar residues" evidence="4">
    <location>
        <begin position="242"/>
        <end position="258"/>
    </location>
</feature>
<feature type="compositionally biased region" description="Polar residues" evidence="4">
    <location>
        <begin position="332"/>
        <end position="344"/>
    </location>
</feature>
<feature type="compositionally biased region" description="Basic and acidic residues" evidence="4">
    <location>
        <begin position="401"/>
        <end position="412"/>
    </location>
</feature>
<feature type="compositionally biased region" description="Polar residues" evidence="4">
    <location>
        <begin position="413"/>
        <end position="428"/>
    </location>
</feature>
<feature type="compositionally biased region" description="Polar residues" evidence="4">
    <location>
        <begin position="439"/>
        <end position="450"/>
    </location>
</feature>
<feature type="compositionally biased region" description="Basic residues" evidence="4">
    <location>
        <begin position="562"/>
        <end position="577"/>
    </location>
</feature>
<feature type="compositionally biased region" description="Low complexity" evidence="4">
    <location>
        <begin position="578"/>
        <end position="597"/>
    </location>
</feature>
<feature type="modified residue" description="N6-acetyllysine" evidence="1">
    <location>
        <position position="77"/>
    </location>
</feature>
<feature type="modified residue" description="N6-acetyllysine" evidence="1">
    <location>
        <position position="144"/>
    </location>
</feature>
<feature type="modified residue" description="Phosphothreonine; by AMPK" evidence="1">
    <location>
        <position position="176"/>
    </location>
</feature>
<feature type="modified residue" description="N6-acetyllysine" evidence="1">
    <location>
        <position position="182"/>
    </location>
</feature>
<feature type="modified residue" description="N6-acetyllysine" evidence="1">
    <location>
        <position position="252"/>
    </location>
</feature>
<feature type="modified residue" description="N6-acetyllysine" evidence="1">
    <location>
        <position position="269"/>
    </location>
</feature>
<feature type="modified residue" description="N6-acetyllysine" evidence="1">
    <location>
        <position position="276"/>
    </location>
</feature>
<feature type="modified residue" description="N6-acetyllysine" evidence="1">
    <location>
        <position position="319"/>
    </location>
</feature>
<feature type="modified residue" description="N6-acetyllysine" evidence="1">
    <location>
        <position position="345"/>
    </location>
</feature>
<feature type="modified residue" description="N6-acetyllysine" evidence="1">
    <location>
        <position position="411"/>
    </location>
</feature>
<feature type="modified residue" description="N6-acetyllysine" evidence="1">
    <location>
        <position position="450"/>
    </location>
</feature>
<feature type="modified residue" description="Phosphoserine; by AMPK" evidence="1">
    <location>
        <position position="538"/>
    </location>
</feature>
<feature type="modified residue" description="N6-acetyllysine" evidence="1">
    <location>
        <position position="756"/>
    </location>
</feature>
<feature type="modified residue" description="N6-acetyllysine" evidence="1">
    <location>
        <position position="777"/>
    </location>
</feature>
<evidence type="ECO:0000250" key="1">
    <source>
        <dbReference type="UniProtKB" id="O70343"/>
    </source>
</evidence>
<evidence type="ECO:0000250" key="2">
    <source>
        <dbReference type="UniProtKB" id="Q9UBK2"/>
    </source>
</evidence>
<evidence type="ECO:0000255" key="3">
    <source>
        <dbReference type="PROSITE-ProRule" id="PRU00176"/>
    </source>
</evidence>
<evidence type="ECO:0000256" key="4">
    <source>
        <dbReference type="SAM" id="MobiDB-lite"/>
    </source>
</evidence>
<reference key="1">
    <citation type="submission" date="2003-03" db="EMBL/GenBank/DDBJ databases">
        <title>Sequences of bovine and swine PGC-1alpha.</title>
        <authorList>
            <person name="Chikuni K."/>
            <person name="Muroya S."/>
            <person name="Nakajima I."/>
        </authorList>
    </citation>
    <scope>NUCLEOTIDE SEQUENCE [MRNA]</scope>
</reference>
<reference key="2">
    <citation type="submission" date="2003-06" db="EMBL/GenBank/DDBJ databases">
        <title>Molecular characterisation of the bovine PPARGC1A gene and association of identified alleles with genetic variation of milk fat synthesis in cattle.</title>
        <authorList>
            <person name="Weikard R."/>
            <person name="Kuehn C."/>
            <person name="Freyer G."/>
            <person name="Goldammer T."/>
            <person name="Schwerin M."/>
        </authorList>
    </citation>
    <scope>NUCLEOTIDE SEQUENCE [MRNA]</scope>
</reference>
<organism>
    <name type="scientific">Bos taurus</name>
    <name type="common">Bovine</name>
    <dbReference type="NCBI Taxonomy" id="9913"/>
    <lineage>
        <taxon>Eukaryota</taxon>
        <taxon>Metazoa</taxon>
        <taxon>Chordata</taxon>
        <taxon>Craniata</taxon>
        <taxon>Vertebrata</taxon>
        <taxon>Euteleostomi</taxon>
        <taxon>Mammalia</taxon>
        <taxon>Eutheria</taxon>
        <taxon>Laurasiatheria</taxon>
        <taxon>Artiodactyla</taxon>
        <taxon>Ruminantia</taxon>
        <taxon>Pecora</taxon>
        <taxon>Bovidae</taxon>
        <taxon>Bovinae</taxon>
        <taxon>Bos</taxon>
    </lineage>
</organism>
<sequence length="796" mass="90309">MAWDMCNQDSVWSDIECAALVGEDQPLCPDLPELDLSELDVNDLDTDSFLGGLKWCSDQSEIISNQYNNEPSNIFEKIDEENEANLLAVLTETLDSLPVDEDGLPSFDALTDGDVTTENEASPSSMPDGTPPPQEAEEPSLLKKLLLAPANTQLSYNECSGLSTQNHANHNHRIRTNPAVVKTENSWSNKAKSICQQQKPQRRPCSELLKYLTTNDDPPHTKPTENRNSSRDKCTSKKKAHTQSQTQHLQAKPTTLSLPLTPESPNDPKGSPFENKTIERTLSVELSGTAGLTPPTTPPHKANQDNPFRASPKLKPSCKTVVPPPSKKARYSESSCTQGSNSTKKGPEQSELYAQLSKTSVLTSGHEERKAKRPSLRLFGDHDYCQSINSKTEILVSTSQELHDSRQLENKDAPSSNGPGQIHSSTDSDPCYLRETAEVSRQVSPGSTRKQLQDQEIRAELNKHFGHPSQAVFDDKADKTSELRDSDFSNEQFSKLPMFINSGLAMDGLFDDSEDESDKLNSPWDGTQSYSLFDVSPSCSSFNSPCRDSVSPPKSLFSQRPQRMRSRSRSFSRHRSCSRSPYSRSRSRSPGSRSSSRSCYYYESGHCRHRTHRNSPLCASRSRSPHSRRPRYDSYEEYQHERLKREEYRREYEKRESERAKQRERQRQKAIEERRVIYVGKIRPDTTRTELRDRFEVFGEIEECTVNLRDDGDSYGFITYRYTCDAFAALENGYTLRRSNETDFELYFCGRKQFFKSNYADLDSNSDDFDPACIKSKYDSLDFDSLLKEAQRSLRR</sequence>
<gene>
    <name type="primary">PPARGC1A</name>
    <name type="synonym">PGC1</name>
    <name type="synonym">PGC1A</name>
    <name type="synonym">PPARGC1</name>
</gene>
<name>PRGC1_BOVIN</name>
<accession>Q865B7</accession>
<accession>Q4L229</accession>
<keyword id="KW-0007">Acetylation</keyword>
<keyword id="KW-0010">Activator</keyword>
<keyword id="KW-0090">Biological rhythms</keyword>
<keyword id="KW-0539">Nucleus</keyword>
<keyword id="KW-0597">Phosphoprotein</keyword>
<keyword id="KW-1185">Reference proteome</keyword>
<keyword id="KW-0694">RNA-binding</keyword>
<keyword id="KW-0804">Transcription</keyword>
<keyword id="KW-0805">Transcription regulation</keyword>
<keyword id="KW-0832">Ubl conjugation</keyword>